<protein>
    <recommendedName>
        <fullName evidence="3">Transmembrane protein 170B</fullName>
    </recommendedName>
</protein>
<gene>
    <name evidence="3" type="primary">Tmem170b</name>
</gene>
<proteinExistence type="inferred from homology"/>
<evidence type="ECO:0000250" key="1">
    <source>
        <dbReference type="UniProtKB" id="Q5T4T1"/>
    </source>
</evidence>
<evidence type="ECO:0000255" key="2"/>
<evidence type="ECO:0000312" key="3">
    <source>
        <dbReference type="MGI" id="MGI:3647046"/>
    </source>
</evidence>
<comment type="subunit">
    <text evidence="1">Interacts with CTNNB1.</text>
</comment>
<comment type="subcellular location">
    <subcellularLocation>
        <location evidence="1">Cell membrane</location>
        <topology evidence="2">Multi-pass membrane protein</topology>
    </subcellularLocation>
</comment>
<comment type="similarity">
    <text evidence="2">Belongs to the TMEM170 family.</text>
</comment>
<dbReference type="EMBL" id="AC133159">
    <property type="status" value="NOT_ANNOTATED_CDS"/>
    <property type="molecule type" value="Genomic_DNA"/>
</dbReference>
<dbReference type="CCDS" id="CCDS49248.1"/>
<dbReference type="RefSeq" id="NP_001157044.1">
    <property type="nucleotide sequence ID" value="NM_001163572.2"/>
</dbReference>
<dbReference type="SMR" id="P86050"/>
<dbReference type="FunCoup" id="P86050">
    <property type="interactions" value="706"/>
</dbReference>
<dbReference type="STRING" id="10090.ENSMUSP00000131144"/>
<dbReference type="GlyCosmos" id="P86050">
    <property type="glycosylation" value="1 site, No reported glycans"/>
</dbReference>
<dbReference type="GlyGen" id="P86050">
    <property type="glycosylation" value="1 site"/>
</dbReference>
<dbReference type="PhosphoSitePlus" id="P86050"/>
<dbReference type="PaxDb" id="10090-ENSMUSP00000131144"/>
<dbReference type="Antibodypedia" id="71126">
    <property type="antibodies" value="5 antibodies from 5 providers"/>
</dbReference>
<dbReference type="Ensembl" id="ENSMUST00000129449.3">
    <property type="protein sequence ID" value="ENSMUSP00000131144.2"/>
    <property type="gene ID" value="ENSMUSG00000087370.4"/>
</dbReference>
<dbReference type="GeneID" id="621976"/>
<dbReference type="KEGG" id="mmu:621976"/>
<dbReference type="UCSC" id="uc011yyr.1">
    <property type="organism name" value="mouse"/>
</dbReference>
<dbReference type="AGR" id="MGI:3647046"/>
<dbReference type="CTD" id="100113407"/>
<dbReference type="MGI" id="MGI:3647046">
    <property type="gene designation" value="Tmem170b"/>
</dbReference>
<dbReference type="VEuPathDB" id="HostDB:ENSMUSG00000087370"/>
<dbReference type="eggNOG" id="KOG4349">
    <property type="taxonomic scope" value="Eukaryota"/>
</dbReference>
<dbReference type="GeneTree" id="ENSGT00940000160424"/>
<dbReference type="HOGENOM" id="CLU_149050_0_0_1"/>
<dbReference type="InParanoid" id="P86050"/>
<dbReference type="OMA" id="DHMINLS"/>
<dbReference type="OrthoDB" id="13807at2759"/>
<dbReference type="PhylomeDB" id="P86050"/>
<dbReference type="TreeFam" id="TF314615"/>
<dbReference type="BioGRID-ORCS" id="621976">
    <property type="hits" value="3 hits in 76 CRISPR screens"/>
</dbReference>
<dbReference type="PRO" id="PR:P86050"/>
<dbReference type="Proteomes" id="UP000000589">
    <property type="component" value="Chromosome 13"/>
</dbReference>
<dbReference type="RNAct" id="P86050">
    <property type="molecule type" value="protein"/>
</dbReference>
<dbReference type="Bgee" id="ENSMUSG00000087370">
    <property type="expression patterns" value="Expressed in otolith organ and 217 other cell types or tissues"/>
</dbReference>
<dbReference type="ExpressionAtlas" id="P86050">
    <property type="expression patterns" value="baseline and differential"/>
</dbReference>
<dbReference type="GO" id="GO:0005886">
    <property type="term" value="C:plasma membrane"/>
    <property type="evidence" value="ECO:0000250"/>
    <property type="project" value="UniProtKB"/>
</dbReference>
<dbReference type="GO" id="GO:0090090">
    <property type="term" value="P:negative regulation of canonical Wnt signaling pathway"/>
    <property type="evidence" value="ECO:0000250"/>
    <property type="project" value="UniProtKB"/>
</dbReference>
<dbReference type="InterPro" id="IPR019334">
    <property type="entry name" value="Transmembrane_pr_170"/>
</dbReference>
<dbReference type="PANTHER" id="PTHR22779">
    <property type="entry name" value="SD17342P"/>
    <property type="match status" value="1"/>
</dbReference>
<dbReference type="PANTHER" id="PTHR22779:SF4">
    <property type="entry name" value="TRANSMEMBRANE PROTEIN 170B"/>
    <property type="match status" value="1"/>
</dbReference>
<dbReference type="Pfam" id="PF10190">
    <property type="entry name" value="Tmemb_170"/>
    <property type="match status" value="1"/>
</dbReference>
<keyword id="KW-1003">Cell membrane</keyword>
<keyword id="KW-0325">Glycoprotein</keyword>
<keyword id="KW-0472">Membrane</keyword>
<keyword id="KW-1185">Reference proteome</keyword>
<keyword id="KW-0812">Transmembrane</keyword>
<keyword id="KW-1133">Transmembrane helix</keyword>
<sequence length="132" mass="14416">MRAEGADHSMINLSVQQVLSLWAHGTVLRNLTEMWYWIFLWALFSSLFVHGAAGVLMFVMLQRHRQGRVISIIAVSIGFLASVTGAMITSAAVAGIYRVAGKNMAPLEALVWGVGQTVLTLIISFSRILATL</sequence>
<accession>P86050</accession>
<feature type="chain" id="PRO_0000354976" description="Transmembrane protein 170B">
    <location>
        <begin position="1"/>
        <end position="132"/>
    </location>
</feature>
<feature type="topological domain" description="Extracellular" evidence="2">
    <location>
        <begin position="1"/>
        <end position="37"/>
    </location>
</feature>
<feature type="transmembrane region" description="Helical" evidence="2">
    <location>
        <begin position="38"/>
        <end position="58"/>
    </location>
</feature>
<feature type="topological domain" description="Cytoplasmic" evidence="2">
    <location>
        <begin position="59"/>
        <end position="68"/>
    </location>
</feature>
<feature type="transmembrane region" description="Helical" evidence="2">
    <location>
        <begin position="69"/>
        <end position="89"/>
    </location>
</feature>
<feature type="topological domain" description="Extracellular" evidence="2">
    <location>
        <begin position="90"/>
        <end position="104"/>
    </location>
</feature>
<feature type="transmembrane region" description="Helical" evidence="2">
    <location>
        <begin position="105"/>
        <end position="125"/>
    </location>
</feature>
<feature type="topological domain" description="Cytoplasmic" evidence="2">
    <location>
        <begin position="126"/>
        <end position="132"/>
    </location>
</feature>
<feature type="glycosylation site" description="N-linked (GlcNAc...) asparagine" evidence="2">
    <location>
        <position position="12"/>
    </location>
</feature>
<reference key="1">
    <citation type="journal article" date="2009" name="PLoS Biol.">
        <title>Lineage-specific biology revealed by a finished genome assembly of the mouse.</title>
        <authorList>
            <person name="Church D.M."/>
            <person name="Goodstadt L."/>
            <person name="Hillier L.W."/>
            <person name="Zody M.C."/>
            <person name="Goldstein S."/>
            <person name="She X."/>
            <person name="Bult C.J."/>
            <person name="Agarwala R."/>
            <person name="Cherry J.L."/>
            <person name="DiCuccio M."/>
            <person name="Hlavina W."/>
            <person name="Kapustin Y."/>
            <person name="Meric P."/>
            <person name="Maglott D."/>
            <person name="Birtle Z."/>
            <person name="Marques A.C."/>
            <person name="Graves T."/>
            <person name="Zhou S."/>
            <person name="Teague B."/>
            <person name="Potamousis K."/>
            <person name="Churas C."/>
            <person name="Place M."/>
            <person name="Herschleb J."/>
            <person name="Runnheim R."/>
            <person name="Forrest D."/>
            <person name="Amos-Landgraf J."/>
            <person name="Schwartz D.C."/>
            <person name="Cheng Z."/>
            <person name="Lindblad-Toh K."/>
            <person name="Eichler E.E."/>
            <person name="Ponting C.P."/>
        </authorList>
    </citation>
    <scope>NUCLEOTIDE SEQUENCE [LARGE SCALE GENOMIC DNA]</scope>
    <source>
        <strain>C57BL/6J</strain>
    </source>
</reference>
<name>T170B_MOUSE</name>
<organism>
    <name type="scientific">Mus musculus</name>
    <name type="common">Mouse</name>
    <dbReference type="NCBI Taxonomy" id="10090"/>
    <lineage>
        <taxon>Eukaryota</taxon>
        <taxon>Metazoa</taxon>
        <taxon>Chordata</taxon>
        <taxon>Craniata</taxon>
        <taxon>Vertebrata</taxon>
        <taxon>Euteleostomi</taxon>
        <taxon>Mammalia</taxon>
        <taxon>Eutheria</taxon>
        <taxon>Euarchontoglires</taxon>
        <taxon>Glires</taxon>
        <taxon>Rodentia</taxon>
        <taxon>Myomorpha</taxon>
        <taxon>Muroidea</taxon>
        <taxon>Muridae</taxon>
        <taxon>Murinae</taxon>
        <taxon>Mus</taxon>
        <taxon>Mus</taxon>
    </lineage>
</organism>